<accession>A5UI04</accession>
<sequence>MSLKLVEILVLGQVLRLNVPIEQEELLRQAARNLDILVSEMKEKTGLIQLDRVLSIVALNLSFELSQEKNKTAKIEEVLRTGIQQLDHSLENIRVTKEPH</sequence>
<keyword id="KW-0131">Cell cycle</keyword>
<keyword id="KW-0132">Cell division</keyword>
<keyword id="KW-0175">Coiled coil</keyword>
<keyword id="KW-0963">Cytoplasm</keyword>
<keyword id="KW-0717">Septation</keyword>
<proteinExistence type="inferred from homology"/>
<comment type="function">
    <text evidence="1">Activator of cell division through the inhibition of FtsZ GTPase activity, therefore promoting FtsZ assembly into bundles of protofilaments necessary for the formation of the division Z ring. It is recruited early at mid-cell but it is not essential for cell division (By similarity).</text>
</comment>
<comment type="subunit">
    <text evidence="1">Homodimer. Interacts with FtsZ (By similarity).</text>
</comment>
<comment type="subcellular location">
    <subcellularLocation>
        <location evidence="1">Cytoplasm</location>
    </subcellularLocation>
    <text evidence="1">Localizes at mid-cell.</text>
</comment>
<comment type="similarity">
    <text evidence="3">Belongs to the ZapA family. Type 1 subfamily.</text>
</comment>
<protein>
    <recommendedName>
        <fullName>Cell division protein ZapA</fullName>
    </recommendedName>
    <alternativeName>
        <fullName>Z ring-associated protein ZapA</fullName>
    </alternativeName>
</protein>
<feature type="chain" id="PRO_0000346124" description="Cell division protein ZapA">
    <location>
        <begin position="1"/>
        <end position="100"/>
    </location>
</feature>
<feature type="coiled-coil region" evidence="2">
    <location>
        <begin position="21"/>
        <end position="45"/>
    </location>
</feature>
<reference key="1">
    <citation type="journal article" date="2007" name="Genome Biol.">
        <title>Characterization and modeling of the Haemophilus influenzae core and supragenomes based on the complete genomic sequences of Rd and 12 clinical nontypeable strains.</title>
        <authorList>
            <person name="Hogg J.S."/>
            <person name="Hu F.Z."/>
            <person name="Janto B."/>
            <person name="Boissy R."/>
            <person name="Hayes J."/>
            <person name="Keefe R."/>
            <person name="Post J.C."/>
            <person name="Ehrlich G.D."/>
        </authorList>
    </citation>
    <scope>NUCLEOTIDE SEQUENCE [LARGE SCALE GENOMIC DNA]</scope>
    <source>
        <strain>PittGG</strain>
    </source>
</reference>
<organism>
    <name type="scientific">Haemophilus influenzae (strain PittGG)</name>
    <dbReference type="NCBI Taxonomy" id="374931"/>
    <lineage>
        <taxon>Bacteria</taxon>
        <taxon>Pseudomonadati</taxon>
        <taxon>Pseudomonadota</taxon>
        <taxon>Gammaproteobacteria</taxon>
        <taxon>Pasteurellales</taxon>
        <taxon>Pasteurellaceae</taxon>
        <taxon>Haemophilus</taxon>
    </lineage>
</organism>
<name>ZAPA_HAEIG</name>
<dbReference type="EMBL" id="CP000672">
    <property type="protein sequence ID" value="ABR00410.1"/>
    <property type="molecule type" value="Genomic_DNA"/>
</dbReference>
<dbReference type="SMR" id="A5UI04"/>
<dbReference type="KEGG" id="hiq:CGSHiGG_07805"/>
<dbReference type="HOGENOM" id="CLU_116623_3_0_6"/>
<dbReference type="Proteomes" id="UP000001990">
    <property type="component" value="Chromosome"/>
</dbReference>
<dbReference type="GO" id="GO:0032153">
    <property type="term" value="C:cell division site"/>
    <property type="evidence" value="ECO:0007669"/>
    <property type="project" value="TreeGrafter"/>
</dbReference>
<dbReference type="GO" id="GO:0030428">
    <property type="term" value="C:cell septum"/>
    <property type="evidence" value="ECO:0007669"/>
    <property type="project" value="TreeGrafter"/>
</dbReference>
<dbReference type="GO" id="GO:0005829">
    <property type="term" value="C:cytosol"/>
    <property type="evidence" value="ECO:0007669"/>
    <property type="project" value="TreeGrafter"/>
</dbReference>
<dbReference type="GO" id="GO:0000917">
    <property type="term" value="P:division septum assembly"/>
    <property type="evidence" value="ECO:0007669"/>
    <property type="project" value="UniProtKB-KW"/>
</dbReference>
<dbReference type="GO" id="GO:0043093">
    <property type="term" value="P:FtsZ-dependent cytokinesis"/>
    <property type="evidence" value="ECO:0007669"/>
    <property type="project" value="TreeGrafter"/>
</dbReference>
<dbReference type="GO" id="GO:0000921">
    <property type="term" value="P:septin ring assembly"/>
    <property type="evidence" value="ECO:0007669"/>
    <property type="project" value="TreeGrafter"/>
</dbReference>
<dbReference type="Gene3D" id="3.30.160.880">
    <property type="entry name" value="Cell division protein ZapA protomer, N-terminal domain"/>
    <property type="match status" value="1"/>
</dbReference>
<dbReference type="InterPro" id="IPR007838">
    <property type="entry name" value="Cell_div_ZapA-like"/>
</dbReference>
<dbReference type="InterPro" id="IPR036192">
    <property type="entry name" value="Cell_div_ZapA-like_sf"/>
</dbReference>
<dbReference type="InterPro" id="IPR042233">
    <property type="entry name" value="Cell_div_ZapA_N"/>
</dbReference>
<dbReference type="PANTHER" id="PTHR34981">
    <property type="entry name" value="CELL DIVISION PROTEIN ZAPA"/>
    <property type="match status" value="1"/>
</dbReference>
<dbReference type="PANTHER" id="PTHR34981:SF1">
    <property type="entry name" value="CELL DIVISION PROTEIN ZAPA"/>
    <property type="match status" value="1"/>
</dbReference>
<dbReference type="Pfam" id="PF05164">
    <property type="entry name" value="ZapA"/>
    <property type="match status" value="1"/>
</dbReference>
<dbReference type="SUPFAM" id="SSF102829">
    <property type="entry name" value="Cell division protein ZapA-like"/>
    <property type="match status" value="1"/>
</dbReference>
<evidence type="ECO:0000250" key="1"/>
<evidence type="ECO:0000255" key="2"/>
<evidence type="ECO:0000305" key="3"/>
<gene>
    <name type="primary">zapA</name>
    <name type="ordered locus">CGSHiGG_07805</name>
</gene>